<name>FEM1A_BOVIN</name>
<reference key="1">
    <citation type="submission" date="2006-02" db="EMBL/GenBank/DDBJ databases">
        <authorList>
            <consortium name="NIH - Mammalian Gene Collection (MGC) project"/>
        </authorList>
    </citation>
    <scope>NUCLEOTIDE SEQUENCE [LARGE SCALE MRNA]</scope>
    <source>
        <strain>Hereford</strain>
        <tissue>Heart ventricle</tissue>
    </source>
</reference>
<proteinExistence type="evidence at transcript level"/>
<keyword id="KW-0040">ANK repeat</keyword>
<keyword id="KW-0963">Cytoplasm</keyword>
<keyword id="KW-0496">Mitochondrion</keyword>
<keyword id="KW-0597">Phosphoprotein</keyword>
<keyword id="KW-1185">Reference proteome</keyword>
<keyword id="KW-0677">Repeat</keyword>
<keyword id="KW-0802">TPR repeat</keyword>
<keyword id="KW-0833">Ubl conjugation pathway</keyword>
<gene>
    <name evidence="1" type="primary">FEM1A</name>
</gene>
<feature type="chain" id="PRO_0000324524" description="Protein fem-1 homolog A">
    <location>
        <begin position="1"/>
        <end position="653"/>
    </location>
</feature>
<feature type="repeat" description="ANK 1">
    <location>
        <begin position="2"/>
        <end position="31"/>
    </location>
</feature>
<feature type="repeat" description="ANK 2">
    <location>
        <begin position="40"/>
        <end position="70"/>
    </location>
</feature>
<feature type="repeat" description="ANK 3">
    <location>
        <begin position="82"/>
        <end position="111"/>
    </location>
</feature>
<feature type="repeat" description="ANK 4">
    <location>
        <begin position="115"/>
        <end position="145"/>
    </location>
</feature>
<feature type="repeat" description="ANK 5">
    <location>
        <begin position="149"/>
        <end position="178"/>
    </location>
</feature>
<feature type="repeat" description="ANK 6">
    <location>
        <begin position="182"/>
        <end position="211"/>
    </location>
</feature>
<feature type="repeat" description="ANK 7">
    <location>
        <begin position="214"/>
        <end position="243"/>
    </location>
</feature>
<feature type="repeat" description="TPR 1">
    <location>
        <begin position="282"/>
        <end position="316"/>
    </location>
</feature>
<feature type="repeat" description="TPR 2">
    <location>
        <begin position="374"/>
        <end position="407"/>
    </location>
</feature>
<feature type="repeat" description="ANK 8">
    <location>
        <begin position="518"/>
        <end position="560"/>
    </location>
</feature>
<feature type="repeat" description="ANK 9">
    <location>
        <begin position="564"/>
        <end position="593"/>
    </location>
</feature>
<feature type="region of interest" description="Disordered" evidence="3">
    <location>
        <begin position="242"/>
        <end position="274"/>
    </location>
</feature>
<feature type="modified residue" description="Phosphoserine" evidence="2">
    <location>
        <position position="108"/>
    </location>
</feature>
<comment type="function">
    <text evidence="1 2">Substrate-recognition component of a Cul2-RING (CRL2) E3 ubiquitin-protein ligase complex of the DesCEND (destruction via C-end degrons) pathway, which recognizes a C-degron located at the extreme C terminus of target proteins, leading to their ubiquitination and degradation. The C-degron recognized by the DesCEND pathway is usually a motif of less than ten residues and can be present in full-length proteins, truncated proteins or proteolytically cleaved forms. The CRL2(FEM1A) complex specifically recognizes proteins with an arginine at the C-terminus: recognizes and binds proteins ending with -Lys/Arg-Xaa-Arg and -Lys/Arg-Xaa-Xaa-Arg C-degrons, such as SIL1 or OR51B2, leading to their ubiquitination and degradation (By similarity). Involved in PGE2-EP4-mediated inhibition of inflammation of macrophages via interaction with NFKB1 and PTGER4. Promotes inflammation in brain microglia through MAP2K4/MKK4-mediated signaling (By similarity).</text>
</comment>
<comment type="pathway">
    <text evidence="1">Protein modification; protein ubiquitination.</text>
</comment>
<comment type="subunit">
    <text evidence="1 2">Component of a CRL2 E3 ubiquitin-protein ligase complex, also named ECS (Elongin BC-CUL2/5-SOCS-box protein) complex, composed of CUL2, Elongin BC (ELOB and ELOC), RBX1 and substrate-specific adapter FEM1A. Interacts with PTGER4 (By similarity). Interacts with NFKB1; the interaction is direct (By similarity).</text>
</comment>
<comment type="subcellular location">
    <subcellularLocation>
        <location evidence="1">Mitochondrion</location>
    </subcellularLocation>
    <subcellularLocation>
        <location evidence="1">Cytoplasm</location>
    </subcellularLocation>
</comment>
<comment type="PTM">
    <text evidence="2">Phosphorylated; highly phosphorylated in myoblasts and myotubes. Phosphorylation at Ser-108 promotes PGE2-EP4-mediated inhibition of inflammation. Dephosphorylated by protein phosphatase 2A (PP2A).</text>
</comment>
<comment type="similarity">
    <text evidence="4">Belongs to the fem-1 family.</text>
</comment>
<dbReference type="EMBL" id="BC114111">
    <property type="protein sequence ID" value="AAI14112.1"/>
    <property type="molecule type" value="mRNA"/>
</dbReference>
<dbReference type="RefSeq" id="NP_001039691.1">
    <property type="nucleotide sequence ID" value="NM_001046226.1"/>
</dbReference>
<dbReference type="SMR" id="Q29RM5"/>
<dbReference type="FunCoup" id="Q29RM5">
    <property type="interactions" value="1086"/>
</dbReference>
<dbReference type="STRING" id="9913.ENSBTAP00000004519"/>
<dbReference type="PaxDb" id="9913-ENSBTAP00000004519"/>
<dbReference type="Ensembl" id="ENSBTAT00000004519.7">
    <property type="protein sequence ID" value="ENSBTAP00000004519.5"/>
    <property type="gene ID" value="ENSBTAG00000003476.7"/>
</dbReference>
<dbReference type="Ensembl" id="ENSBTAT00000114795.1">
    <property type="protein sequence ID" value="ENSBTAP00000080666.1"/>
    <property type="gene ID" value="ENSBTAG00000003476.7"/>
</dbReference>
<dbReference type="GeneID" id="516550"/>
<dbReference type="KEGG" id="bta:516550"/>
<dbReference type="CTD" id="55527"/>
<dbReference type="VEuPathDB" id="HostDB:ENSBTAG00000003476"/>
<dbReference type="VGNC" id="VGNC:28944">
    <property type="gene designation" value="FEM1A"/>
</dbReference>
<dbReference type="eggNOG" id="KOG0508">
    <property type="taxonomic scope" value="Eukaryota"/>
</dbReference>
<dbReference type="GeneTree" id="ENSGT00940000161210"/>
<dbReference type="HOGENOM" id="CLU_020042_2_0_1"/>
<dbReference type="InParanoid" id="Q29RM5"/>
<dbReference type="OMA" id="EQSSGHP"/>
<dbReference type="OrthoDB" id="4429489at2759"/>
<dbReference type="TreeFam" id="TF351376"/>
<dbReference type="Reactome" id="R-BTA-8951664">
    <property type="pathway name" value="Neddylation"/>
</dbReference>
<dbReference type="UniPathway" id="UPA00143"/>
<dbReference type="Proteomes" id="UP000009136">
    <property type="component" value="Chromosome 7"/>
</dbReference>
<dbReference type="Bgee" id="ENSBTAG00000003476">
    <property type="expression patterns" value="Expressed in choroid plexus and 105 other cell types or tissues"/>
</dbReference>
<dbReference type="GO" id="GO:0031462">
    <property type="term" value="C:Cul2-RING ubiquitin ligase complex"/>
    <property type="evidence" value="ECO:0000250"/>
    <property type="project" value="UniProtKB"/>
</dbReference>
<dbReference type="GO" id="GO:0005739">
    <property type="term" value="C:mitochondrion"/>
    <property type="evidence" value="ECO:0000250"/>
    <property type="project" value="UniProtKB"/>
</dbReference>
<dbReference type="GO" id="GO:0000151">
    <property type="term" value="C:ubiquitin ligase complex"/>
    <property type="evidence" value="ECO:0000318"/>
    <property type="project" value="GO_Central"/>
</dbReference>
<dbReference type="GO" id="GO:0031867">
    <property type="term" value="F:EP4 subtype prostaglandin E2 receptor binding"/>
    <property type="evidence" value="ECO:0007669"/>
    <property type="project" value="Ensembl"/>
</dbReference>
<dbReference type="GO" id="GO:1990756">
    <property type="term" value="F:ubiquitin-like ligase-substrate adaptor activity"/>
    <property type="evidence" value="ECO:0000250"/>
    <property type="project" value="UniProtKB"/>
</dbReference>
<dbReference type="GO" id="GO:0050728">
    <property type="term" value="P:negative regulation of inflammatory response"/>
    <property type="evidence" value="ECO:0000318"/>
    <property type="project" value="GO_Central"/>
</dbReference>
<dbReference type="GO" id="GO:0050729">
    <property type="term" value="P:positive regulation of inflammatory response"/>
    <property type="evidence" value="ECO:0000250"/>
    <property type="project" value="UniProtKB"/>
</dbReference>
<dbReference type="GO" id="GO:0043161">
    <property type="term" value="P:proteasome-mediated ubiquitin-dependent protein catabolic process"/>
    <property type="evidence" value="ECO:0000318"/>
    <property type="project" value="GO_Central"/>
</dbReference>
<dbReference type="GO" id="GO:0016567">
    <property type="term" value="P:protein ubiquitination"/>
    <property type="evidence" value="ECO:0007669"/>
    <property type="project" value="UniProtKB-UniPathway"/>
</dbReference>
<dbReference type="GO" id="GO:0051438">
    <property type="term" value="P:regulation of ubiquitin-protein transferase activity"/>
    <property type="evidence" value="ECO:0000250"/>
    <property type="project" value="UniProtKB"/>
</dbReference>
<dbReference type="GO" id="GO:0140627">
    <property type="term" value="P:ubiquitin-dependent protein catabolic process via the C-end degron rule pathway"/>
    <property type="evidence" value="ECO:0000250"/>
    <property type="project" value="UniProtKB"/>
</dbReference>
<dbReference type="FunFam" id="1.25.40.20:FF:000076">
    <property type="entry name" value="Fem-1 homolog c (C.elegans)"/>
    <property type="match status" value="1"/>
</dbReference>
<dbReference type="FunFam" id="1.25.40.10:FF:000261">
    <property type="entry name" value="protein fem-1 homolog A"/>
    <property type="match status" value="1"/>
</dbReference>
<dbReference type="FunFam" id="1.25.40.20:FF:000133">
    <property type="entry name" value="protein fem-1 homolog A"/>
    <property type="match status" value="1"/>
</dbReference>
<dbReference type="FunFam" id="1.25.40.20:FF:000209">
    <property type="entry name" value="protein fem-1 homolog A"/>
    <property type="match status" value="1"/>
</dbReference>
<dbReference type="Gene3D" id="1.25.40.20">
    <property type="entry name" value="Ankyrin repeat-containing domain"/>
    <property type="match status" value="3"/>
</dbReference>
<dbReference type="Gene3D" id="1.25.40.10">
    <property type="entry name" value="Tetratricopeptide repeat domain"/>
    <property type="match status" value="1"/>
</dbReference>
<dbReference type="InterPro" id="IPR002110">
    <property type="entry name" value="Ankyrin_rpt"/>
</dbReference>
<dbReference type="InterPro" id="IPR036770">
    <property type="entry name" value="Ankyrin_rpt-contain_sf"/>
</dbReference>
<dbReference type="InterPro" id="IPR011990">
    <property type="entry name" value="TPR-like_helical_dom_sf"/>
</dbReference>
<dbReference type="PANTHER" id="PTHR24173">
    <property type="entry name" value="ANKYRIN REPEAT CONTAINING"/>
    <property type="match status" value="1"/>
</dbReference>
<dbReference type="PANTHER" id="PTHR24173:SF74">
    <property type="entry name" value="ANKYRIN REPEAT DOMAIN-CONTAINING PROTEIN 16"/>
    <property type="match status" value="1"/>
</dbReference>
<dbReference type="Pfam" id="PF12796">
    <property type="entry name" value="Ank_2"/>
    <property type="match status" value="4"/>
</dbReference>
<dbReference type="PRINTS" id="PR01415">
    <property type="entry name" value="ANKYRIN"/>
</dbReference>
<dbReference type="SMART" id="SM00248">
    <property type="entry name" value="ANK"/>
    <property type="match status" value="9"/>
</dbReference>
<dbReference type="SUPFAM" id="SSF48403">
    <property type="entry name" value="Ankyrin repeat"/>
    <property type="match status" value="2"/>
</dbReference>
<dbReference type="SUPFAM" id="SSF48452">
    <property type="entry name" value="TPR-like"/>
    <property type="match status" value="1"/>
</dbReference>
<dbReference type="PROSITE" id="PS50297">
    <property type="entry name" value="ANK_REP_REGION"/>
    <property type="match status" value="2"/>
</dbReference>
<dbReference type="PROSITE" id="PS50088">
    <property type="entry name" value="ANK_REPEAT"/>
    <property type="match status" value="7"/>
</dbReference>
<organism>
    <name type="scientific">Bos taurus</name>
    <name type="common">Bovine</name>
    <dbReference type="NCBI Taxonomy" id="9913"/>
    <lineage>
        <taxon>Eukaryota</taxon>
        <taxon>Metazoa</taxon>
        <taxon>Chordata</taxon>
        <taxon>Craniata</taxon>
        <taxon>Vertebrata</taxon>
        <taxon>Euteleostomi</taxon>
        <taxon>Mammalia</taxon>
        <taxon>Eutheria</taxon>
        <taxon>Laurasiatheria</taxon>
        <taxon>Artiodactyla</taxon>
        <taxon>Ruminantia</taxon>
        <taxon>Pecora</taxon>
        <taxon>Bovidae</taxon>
        <taxon>Bovinae</taxon>
        <taxon>Bos</taxon>
    </lineage>
</organism>
<accession>Q29RM5</accession>
<sequence length="653" mass="72100">MDLHTAVYNAARDGKLQLLQKLLSGRSREELEELTGEVASGGTPLLIAARYGHLDVVEYLVDRCGASVEAGGSVHFDGEIIEGAPPLWAASAAGHLDVVRSLLRRGASVNRTTRTNSTPLRAACFDGHLEVVRYLVGEHQADLEVANRHGHTCLMISCYKGHREIARYLLEQGAQVNRRSAKGNTALHDCAESGSLEILQLLLGCNARMERDGYGMTPLLAASVTGHTNIVEYLIQEQPAGDEQAQPGLARVQPQGARSSPEEPPSGESYESCCPTSREAAVEALELLGATYVDKKRDLLGALKHWRRAMELRHQGGEYLPKPEPPQLVLAYDYSREVNTTEELEALITDPDEMRMQALLIRERILGPSHPDTSYYIRYRGAVYADSGNFERCIRLWKYALDMQQNNLEPLSPMTASSFLSFAELFSYVLQDRSAKGSLGTPIGFADLMGVLCKGVREVERALQLPKEPGDSAQFTKALAIILHLLYLLEKVECTPDQEHLKHQTVYRLLKCAPRGKNGFTPLHMAVDAETTNVGRYPVGRFPSLQVVKVLLDCGADPDSRDFDNNTPLHIAAQNNCPGIMNALIEAGAHMDATNAFKKTAYELLDEKLLAKSTIQPFNYVTLQCLAARALDKNKIPYKGFIPEELEAFIELH</sequence>
<evidence type="ECO:0000250" key="1">
    <source>
        <dbReference type="UniProtKB" id="Q9BSK4"/>
    </source>
</evidence>
<evidence type="ECO:0000250" key="2">
    <source>
        <dbReference type="UniProtKB" id="Q9Z2G1"/>
    </source>
</evidence>
<evidence type="ECO:0000256" key="3">
    <source>
        <dbReference type="SAM" id="MobiDB-lite"/>
    </source>
</evidence>
<evidence type="ECO:0000305" key="4"/>
<protein>
    <recommendedName>
        <fullName evidence="4">Protein fem-1 homolog A</fullName>
        <shortName evidence="4">FEM1a</shortName>
    </recommendedName>
    <alternativeName>
        <fullName evidence="4">FEM1-alpha</fullName>
    </alternativeName>
</protein>